<reference key="1">
    <citation type="journal article" date="2006" name="Nature">
        <title>Insights from the genome of the biotrophic fungal plant pathogen Ustilago maydis.</title>
        <authorList>
            <person name="Kaemper J."/>
            <person name="Kahmann R."/>
            <person name="Boelker M."/>
            <person name="Ma L.-J."/>
            <person name="Brefort T."/>
            <person name="Saville B.J."/>
            <person name="Banuett F."/>
            <person name="Kronstad J.W."/>
            <person name="Gold S.E."/>
            <person name="Mueller O."/>
            <person name="Perlin M.H."/>
            <person name="Woesten H.A.B."/>
            <person name="de Vries R."/>
            <person name="Ruiz-Herrera J."/>
            <person name="Reynaga-Pena C.G."/>
            <person name="Snetselaar K."/>
            <person name="McCann M."/>
            <person name="Perez-Martin J."/>
            <person name="Feldbruegge M."/>
            <person name="Basse C.W."/>
            <person name="Steinberg G."/>
            <person name="Ibeas J.I."/>
            <person name="Holloman W."/>
            <person name="Guzman P."/>
            <person name="Farman M.L."/>
            <person name="Stajich J.E."/>
            <person name="Sentandreu R."/>
            <person name="Gonzalez-Prieto J.M."/>
            <person name="Kennell J.C."/>
            <person name="Molina L."/>
            <person name="Schirawski J."/>
            <person name="Mendoza-Mendoza A."/>
            <person name="Greilinger D."/>
            <person name="Muench K."/>
            <person name="Roessel N."/>
            <person name="Scherer M."/>
            <person name="Vranes M."/>
            <person name="Ladendorf O."/>
            <person name="Vincon V."/>
            <person name="Fuchs U."/>
            <person name="Sandrock B."/>
            <person name="Meng S."/>
            <person name="Ho E.C.H."/>
            <person name="Cahill M.J."/>
            <person name="Boyce K.J."/>
            <person name="Klose J."/>
            <person name="Klosterman S.J."/>
            <person name="Deelstra H.J."/>
            <person name="Ortiz-Castellanos L."/>
            <person name="Li W."/>
            <person name="Sanchez-Alonso P."/>
            <person name="Schreier P.H."/>
            <person name="Haeuser-Hahn I."/>
            <person name="Vaupel M."/>
            <person name="Koopmann E."/>
            <person name="Friedrich G."/>
            <person name="Voss H."/>
            <person name="Schlueter T."/>
            <person name="Margolis J."/>
            <person name="Platt D."/>
            <person name="Swimmer C."/>
            <person name="Gnirke A."/>
            <person name="Chen F."/>
            <person name="Vysotskaia V."/>
            <person name="Mannhaupt G."/>
            <person name="Gueldener U."/>
            <person name="Muensterkoetter M."/>
            <person name="Haase D."/>
            <person name="Oesterheld M."/>
            <person name="Mewes H.-W."/>
            <person name="Mauceli E.W."/>
            <person name="DeCaprio D."/>
            <person name="Wade C.M."/>
            <person name="Butler J."/>
            <person name="Young S.K."/>
            <person name="Jaffe D.B."/>
            <person name="Calvo S.E."/>
            <person name="Nusbaum C."/>
            <person name="Galagan J.E."/>
            <person name="Birren B.W."/>
        </authorList>
    </citation>
    <scope>NUCLEOTIDE SEQUENCE [LARGE SCALE GENOMIC DNA]</scope>
    <source>
        <strain>DSM 14603 / FGSC 9021 / UM521</strain>
    </source>
</reference>
<reference key="2">
    <citation type="submission" date="2014-09" db="EMBL/GenBank/DDBJ databases">
        <authorList>
            <person name="Gueldener U."/>
            <person name="Muensterkoetter M."/>
            <person name="Walter M.C."/>
            <person name="Mannhaupt G."/>
            <person name="Kahmann R."/>
        </authorList>
    </citation>
    <scope>GENOME REANNOTATION</scope>
    <source>
        <strain>DSM 14603 / FGSC 9021 / UM521</strain>
    </source>
</reference>
<gene>
    <name type="primary">HAT2</name>
    <name type="ORF">UMAG_11999</name>
</gene>
<organism>
    <name type="scientific">Mycosarcoma maydis</name>
    <name type="common">Corn smut fungus</name>
    <name type="synonym">Ustilago maydis</name>
    <dbReference type="NCBI Taxonomy" id="5270"/>
    <lineage>
        <taxon>Eukaryota</taxon>
        <taxon>Fungi</taxon>
        <taxon>Dikarya</taxon>
        <taxon>Basidiomycota</taxon>
        <taxon>Ustilaginomycotina</taxon>
        <taxon>Ustilaginomycetes</taxon>
        <taxon>Ustilaginales</taxon>
        <taxon>Ustilaginaceae</taxon>
        <taxon>Mycosarcoma</taxon>
    </lineage>
</organism>
<sequence>MDASDFVEDEAAIAQQKLSNEEYKIWKKNSPFLYDLVVTHALEWPSLTCQWLPDKESPAGQSYTQHRLLLGTHTSGQDQNYLQFAQVQLPTTGADGASNSAESRLDLKQYDEDKGEIGSYSATTARLSIVQKINHDGEINRARYCPQNCDLIATRSVTGKTYIFDRTKHSNTPSADGVCRPDIILEGQHKEGYGLSWSPLKQGHILAASEDTTVCHWDINNYTKPNNTLQPSATYTGHTAIVEDVAWHNHHESLFGSVGDDRQLLIWDIREPASAPKYRVEAHTGEVNALAFSPENENILVTGSSDKSVGVWDLRNLKVKLHSLESHTDEILSVCWSPHHATVLASASADRRVNLWDLSKIGQEQTPDDAEDGPPELIFVHGGHTSRPTDLAWSPHMEWALTSAAEDNIVMVWRPSKAVIDTGNEELTPDDLE</sequence>
<name>HAT2_MYCMD</name>
<protein>
    <recommendedName>
        <fullName>Histone acetyltransferase type B subunit 2</fullName>
    </recommendedName>
</protein>
<proteinExistence type="inferred from homology"/>
<comment type="function">
    <text evidence="2">Regulatory subunit of the histone acetylase B (HAT-B) complex. The complex acetylates 'Lys-12' of histone H4 which is required for telomeric silencing.</text>
</comment>
<comment type="subunit">
    <text evidence="2">Component of the HAT-B complex composed of at least HAT1 and HAT2. The HAT-B complex binds to histone H4 tail.</text>
</comment>
<comment type="subcellular location">
    <subcellularLocation>
        <location evidence="1">Cytoplasm</location>
    </subcellularLocation>
    <subcellularLocation>
        <location evidence="1">Nucleus</location>
    </subcellularLocation>
</comment>
<comment type="similarity">
    <text evidence="4">Belongs to the WD repeat RBAP46/RBAP48/MSI1 family.</text>
</comment>
<evidence type="ECO:0000250" key="1"/>
<evidence type="ECO:0000250" key="2">
    <source>
        <dbReference type="UniProtKB" id="P39984"/>
    </source>
</evidence>
<evidence type="ECO:0000255" key="3"/>
<evidence type="ECO:0000305" key="4"/>
<keyword id="KW-0156">Chromatin regulator</keyword>
<keyword id="KW-0963">Cytoplasm</keyword>
<keyword id="KW-0539">Nucleus</keyword>
<keyword id="KW-1185">Reference proteome</keyword>
<keyword id="KW-0677">Repeat</keyword>
<keyword id="KW-0853">WD repeat</keyword>
<accession>Q4P553</accession>
<accession>A0A0D1CIB0</accession>
<dbReference type="EMBL" id="CM003156">
    <property type="protein sequence ID" value="KIS66698.1"/>
    <property type="molecule type" value="Genomic_DNA"/>
</dbReference>
<dbReference type="RefSeq" id="XP_011391769.1">
    <property type="nucleotide sequence ID" value="XM_011393467.1"/>
</dbReference>
<dbReference type="SMR" id="Q4P553"/>
<dbReference type="FunCoup" id="Q4P553">
    <property type="interactions" value="719"/>
</dbReference>
<dbReference type="STRING" id="237631.Q4P553"/>
<dbReference type="EnsemblFungi" id="KIS66698">
    <property type="protein sequence ID" value="KIS66698"/>
    <property type="gene ID" value="UMAG_11999"/>
</dbReference>
<dbReference type="GeneID" id="23567792"/>
<dbReference type="KEGG" id="uma:UMAG_11999"/>
<dbReference type="VEuPathDB" id="FungiDB:UMAG_11999"/>
<dbReference type="eggNOG" id="KOG0264">
    <property type="taxonomic scope" value="Eukaryota"/>
</dbReference>
<dbReference type="HOGENOM" id="CLU_020445_3_1_1"/>
<dbReference type="InParanoid" id="Q4P553"/>
<dbReference type="OrthoDB" id="427795at2759"/>
<dbReference type="Proteomes" id="UP000000561">
    <property type="component" value="Chromosome 17"/>
</dbReference>
<dbReference type="GO" id="GO:0005737">
    <property type="term" value="C:cytoplasm"/>
    <property type="evidence" value="ECO:0000318"/>
    <property type="project" value="GO_Central"/>
</dbReference>
<dbReference type="GO" id="GO:0005634">
    <property type="term" value="C:nucleus"/>
    <property type="evidence" value="ECO:0000318"/>
    <property type="project" value="GO_Central"/>
</dbReference>
<dbReference type="GO" id="GO:0033698">
    <property type="term" value="C:Rpd3L complex"/>
    <property type="evidence" value="ECO:0000318"/>
    <property type="project" value="GO_Central"/>
</dbReference>
<dbReference type="GO" id="GO:0070210">
    <property type="term" value="C:Rpd3L-Expanded complex"/>
    <property type="evidence" value="ECO:0000318"/>
    <property type="project" value="GO_Central"/>
</dbReference>
<dbReference type="GO" id="GO:0042393">
    <property type="term" value="F:histone binding"/>
    <property type="evidence" value="ECO:0000318"/>
    <property type="project" value="GO_Central"/>
</dbReference>
<dbReference type="GO" id="GO:0006338">
    <property type="term" value="P:chromatin remodeling"/>
    <property type="evidence" value="ECO:0000318"/>
    <property type="project" value="GO_Central"/>
</dbReference>
<dbReference type="GO" id="GO:0006355">
    <property type="term" value="P:regulation of DNA-templated transcription"/>
    <property type="evidence" value="ECO:0000318"/>
    <property type="project" value="GO_Central"/>
</dbReference>
<dbReference type="Gene3D" id="2.130.10.10">
    <property type="entry name" value="YVTN repeat-like/Quinoprotein amine dehydrogenase"/>
    <property type="match status" value="1"/>
</dbReference>
<dbReference type="InterPro" id="IPR020472">
    <property type="entry name" value="G-protein_beta_WD-40_rep"/>
</dbReference>
<dbReference type="InterPro" id="IPR022052">
    <property type="entry name" value="Histone-bd_RBBP4-like_N"/>
</dbReference>
<dbReference type="InterPro" id="IPR015943">
    <property type="entry name" value="WD40/YVTN_repeat-like_dom_sf"/>
</dbReference>
<dbReference type="InterPro" id="IPR019775">
    <property type="entry name" value="WD40_repeat_CS"/>
</dbReference>
<dbReference type="InterPro" id="IPR036322">
    <property type="entry name" value="WD40_repeat_dom_sf"/>
</dbReference>
<dbReference type="InterPro" id="IPR001680">
    <property type="entry name" value="WD40_rpt"/>
</dbReference>
<dbReference type="InterPro" id="IPR050459">
    <property type="entry name" value="WD_repeat_RBAP46/RBAP48/MSI1"/>
</dbReference>
<dbReference type="PANTHER" id="PTHR22850">
    <property type="entry name" value="WD40 REPEAT FAMILY"/>
    <property type="match status" value="1"/>
</dbReference>
<dbReference type="Pfam" id="PF23609">
    <property type="entry name" value="Beta-prop_EIPR1"/>
    <property type="match status" value="1"/>
</dbReference>
<dbReference type="Pfam" id="PF12265">
    <property type="entry name" value="CAF1C_H4-bd"/>
    <property type="match status" value="1"/>
</dbReference>
<dbReference type="Pfam" id="PF00400">
    <property type="entry name" value="WD40"/>
    <property type="match status" value="1"/>
</dbReference>
<dbReference type="PRINTS" id="PR00320">
    <property type="entry name" value="GPROTEINBRPT"/>
</dbReference>
<dbReference type="SMART" id="SM00320">
    <property type="entry name" value="WD40"/>
    <property type="match status" value="6"/>
</dbReference>
<dbReference type="SUPFAM" id="SSF50978">
    <property type="entry name" value="WD40 repeat-like"/>
    <property type="match status" value="1"/>
</dbReference>
<dbReference type="PROSITE" id="PS00678">
    <property type="entry name" value="WD_REPEATS_1"/>
    <property type="match status" value="2"/>
</dbReference>
<dbReference type="PROSITE" id="PS50082">
    <property type="entry name" value="WD_REPEATS_2"/>
    <property type="match status" value="4"/>
</dbReference>
<dbReference type="PROSITE" id="PS50294">
    <property type="entry name" value="WD_REPEATS_REGION"/>
    <property type="match status" value="1"/>
</dbReference>
<feature type="chain" id="PRO_0000227744" description="Histone acetyltransferase type B subunit 2">
    <location>
        <begin position="1"/>
        <end position="433"/>
    </location>
</feature>
<feature type="repeat" description="WD 1" evidence="3">
    <location>
        <begin position="134"/>
        <end position="174"/>
    </location>
</feature>
<feature type="repeat" description="WD 2" evidence="3">
    <location>
        <begin position="187"/>
        <end position="227"/>
    </location>
</feature>
<feature type="repeat" description="WD 3" evidence="3">
    <location>
        <begin position="237"/>
        <end position="277"/>
    </location>
</feature>
<feature type="repeat" description="WD 4" evidence="3">
    <location>
        <begin position="282"/>
        <end position="322"/>
    </location>
</feature>
<feature type="repeat" description="WD 5" evidence="3">
    <location>
        <begin position="326"/>
        <end position="366"/>
    </location>
</feature>
<feature type="repeat" description="WD 6" evidence="3">
    <location>
        <begin position="383"/>
        <end position="433"/>
    </location>
</feature>
<feature type="region of interest" description="Interaction with the histone H4 N-terminus" evidence="2">
    <location>
        <begin position="368"/>
        <end position="372"/>
    </location>
</feature>